<comment type="function">
    <text evidence="1">Catalyzes the deacetylation of N-acetylaspartic acid (NAA) to produce acetate and L-aspartate. NAA occurs in high concentration in brain and its hydrolysis NAA plays a significant part in the maintenance of intact white matter. In other tissues it acts as a scavenger of NAA from body fluids.</text>
</comment>
<comment type="catalytic activity">
    <reaction evidence="1">
        <text>an N-acyl-L-aspartate + H2O = a carboxylate + L-aspartate</text>
        <dbReference type="Rhea" id="RHEA:10872"/>
        <dbReference type="ChEBI" id="CHEBI:15377"/>
        <dbReference type="ChEBI" id="CHEBI:29067"/>
        <dbReference type="ChEBI" id="CHEBI:29991"/>
        <dbReference type="ChEBI" id="CHEBI:58497"/>
        <dbReference type="EC" id="3.5.1.15"/>
    </reaction>
    <physiologicalReaction direction="left-to-right" evidence="1">
        <dbReference type="Rhea" id="RHEA:10873"/>
    </physiologicalReaction>
</comment>
<comment type="catalytic activity">
    <reaction evidence="1">
        <text>N-acetyl-L-aspartate + H2O = L-aspartate + acetate</text>
        <dbReference type="Rhea" id="RHEA:59408"/>
        <dbReference type="ChEBI" id="CHEBI:15377"/>
        <dbReference type="ChEBI" id="CHEBI:16953"/>
        <dbReference type="ChEBI" id="CHEBI:29991"/>
        <dbReference type="ChEBI" id="CHEBI:30089"/>
    </reaction>
    <physiologicalReaction direction="left-to-right" evidence="1">
        <dbReference type="Rhea" id="RHEA:59409"/>
    </physiologicalReaction>
</comment>
<comment type="cofactor">
    <cofactor evidence="1">
        <name>Zn(2+)</name>
        <dbReference type="ChEBI" id="CHEBI:29105"/>
    </cofactor>
    <text evidence="1">Binds 1 zinc ion per subunit.</text>
</comment>
<comment type="subunit">
    <text evidence="1">Homodimer.</text>
</comment>
<comment type="subcellular location">
    <subcellularLocation>
        <location evidence="2">Cytoplasm</location>
    </subcellularLocation>
    <subcellularLocation>
        <location evidence="2">Nucleus</location>
    </subcellularLocation>
</comment>
<comment type="similarity">
    <text evidence="3">Belongs to the AspA/AstE family. Aspartoacylase subfamily.</text>
</comment>
<protein>
    <recommendedName>
        <fullName evidence="1">Aspartoacylase</fullName>
        <ecNumber evidence="1">3.5.1.15</ecNumber>
    </recommendedName>
    <alternativeName>
        <fullName>Aminoacylase-2</fullName>
        <shortName>ACY-2</shortName>
    </alternativeName>
</protein>
<accession>P46446</accession>
<keyword id="KW-0963">Cytoplasm</keyword>
<keyword id="KW-0903">Direct protein sequencing</keyword>
<keyword id="KW-0378">Hydrolase</keyword>
<keyword id="KW-0479">Metal-binding</keyword>
<keyword id="KW-0539">Nucleus</keyword>
<keyword id="KW-1185">Reference proteome</keyword>
<keyword id="KW-0862">Zinc</keyword>
<sequence length="313" mass="35738">MTSCHVAEDPIKKVAIFGGTHGNELTGVFLVKHWLENSTEIQRTGLEVKPFITNPRAVKKCTRYIDCDLNRVFDPENLGKKKSEDLPYEVRRAQEINHLFGPKDSEDSYDIIFDLHNTTSNMGCTLILEDSRNDFLIQMFHYIKTSLAPLPCYVYLIEHPSLKYATTRSIAKYPVGIEVGPQPQGVLRADILDQMRKMIQHALDFIHNFNEGKEFPPCAIEVYKIMRKVDYPRNESGEISAIIHPKLQDQDWKPLHPEDPVFLTLDGKTIPLGGDQTVYPVFVNEAAYYEKKEAFAKTTKLTLNANSIRSSLH</sequence>
<dbReference type="EC" id="3.5.1.15" evidence="1"/>
<dbReference type="EMBL" id="S74726">
    <property type="protein sequence ID" value="AAD14980.1"/>
    <property type="molecule type" value="Genomic_DNA"/>
</dbReference>
<dbReference type="SMR" id="P46446"/>
<dbReference type="FunCoup" id="P46446">
    <property type="interactions" value="43"/>
</dbReference>
<dbReference type="STRING" id="9913.ENSBTAP00000067259"/>
<dbReference type="PaxDb" id="9913-ENSBTAP00000004734"/>
<dbReference type="eggNOG" id="ENOG502QRAK">
    <property type="taxonomic scope" value="Eukaryota"/>
</dbReference>
<dbReference type="InParanoid" id="P46446"/>
<dbReference type="Proteomes" id="UP000009136">
    <property type="component" value="Unplaced"/>
</dbReference>
<dbReference type="GO" id="GO:0005829">
    <property type="term" value="C:cytosol"/>
    <property type="evidence" value="ECO:0000318"/>
    <property type="project" value="GO_Central"/>
</dbReference>
<dbReference type="GO" id="GO:0005634">
    <property type="term" value="C:nucleus"/>
    <property type="evidence" value="ECO:0007669"/>
    <property type="project" value="UniProtKB-SubCell"/>
</dbReference>
<dbReference type="GO" id="GO:0019807">
    <property type="term" value="F:aspartoacylase activity"/>
    <property type="evidence" value="ECO:0000250"/>
    <property type="project" value="UniProtKB"/>
</dbReference>
<dbReference type="GO" id="GO:0016811">
    <property type="term" value="F:hydrolase activity, acting on carbon-nitrogen (but not peptide) bonds, in linear amides"/>
    <property type="evidence" value="ECO:0000318"/>
    <property type="project" value="GO_Central"/>
</dbReference>
<dbReference type="GO" id="GO:0016788">
    <property type="term" value="F:hydrolase activity, acting on ester bonds"/>
    <property type="evidence" value="ECO:0007669"/>
    <property type="project" value="InterPro"/>
</dbReference>
<dbReference type="GO" id="GO:0046872">
    <property type="term" value="F:metal ion binding"/>
    <property type="evidence" value="ECO:0007669"/>
    <property type="project" value="UniProtKB-KW"/>
</dbReference>
<dbReference type="CDD" id="cd06909">
    <property type="entry name" value="M14_ASPA"/>
    <property type="match status" value="1"/>
</dbReference>
<dbReference type="FunFam" id="2.20.25.160:FF:000001">
    <property type="entry name" value="Aspartoacylase"/>
    <property type="match status" value="1"/>
</dbReference>
<dbReference type="FunFam" id="3.40.630.10:FF:000025">
    <property type="entry name" value="aspartoacylase"/>
    <property type="match status" value="1"/>
</dbReference>
<dbReference type="Gene3D" id="2.20.25.160">
    <property type="match status" value="1"/>
</dbReference>
<dbReference type="Gene3D" id="3.40.630.10">
    <property type="entry name" value="Zn peptidases"/>
    <property type="match status" value="1"/>
</dbReference>
<dbReference type="HAMAP" id="MF_00704">
    <property type="entry name" value="Aspartoacylase"/>
    <property type="match status" value="1"/>
</dbReference>
<dbReference type="InterPro" id="IPR050178">
    <property type="entry name" value="AspA/AstE_fam"/>
</dbReference>
<dbReference type="InterPro" id="IPR016708">
    <property type="entry name" value="Aspartoacylase"/>
</dbReference>
<dbReference type="InterPro" id="IPR055438">
    <property type="entry name" value="AstE_AspA_cat"/>
</dbReference>
<dbReference type="InterPro" id="IPR007036">
    <property type="entry name" value="Aste_AspA_hybrid_dom"/>
</dbReference>
<dbReference type="NCBIfam" id="NF002601">
    <property type="entry name" value="PRK02259.1"/>
    <property type="match status" value="1"/>
</dbReference>
<dbReference type="PANTHER" id="PTHR15162">
    <property type="entry name" value="ASPARTOACYLASE"/>
    <property type="match status" value="1"/>
</dbReference>
<dbReference type="PANTHER" id="PTHR15162:SF9">
    <property type="entry name" value="ASPARTOACYLASE"/>
    <property type="match status" value="1"/>
</dbReference>
<dbReference type="Pfam" id="PF24827">
    <property type="entry name" value="AstE_AspA_cat"/>
    <property type="match status" value="1"/>
</dbReference>
<dbReference type="Pfam" id="PF04952">
    <property type="entry name" value="AstE_AspA_hybrid"/>
    <property type="match status" value="1"/>
</dbReference>
<dbReference type="PIRSF" id="PIRSF018001">
    <property type="entry name" value="Aspartoacylase"/>
    <property type="match status" value="1"/>
</dbReference>
<dbReference type="SUPFAM" id="SSF53187">
    <property type="entry name" value="Zn-dependent exopeptidases"/>
    <property type="match status" value="1"/>
</dbReference>
<organism>
    <name type="scientific">Bos taurus</name>
    <name type="common">Bovine</name>
    <dbReference type="NCBI Taxonomy" id="9913"/>
    <lineage>
        <taxon>Eukaryota</taxon>
        <taxon>Metazoa</taxon>
        <taxon>Chordata</taxon>
        <taxon>Craniata</taxon>
        <taxon>Vertebrata</taxon>
        <taxon>Euteleostomi</taxon>
        <taxon>Mammalia</taxon>
        <taxon>Eutheria</taxon>
        <taxon>Laurasiatheria</taxon>
        <taxon>Artiodactyla</taxon>
        <taxon>Ruminantia</taxon>
        <taxon>Pecora</taxon>
        <taxon>Bovidae</taxon>
        <taxon>Bovinae</taxon>
        <taxon>Bos</taxon>
    </lineage>
</organism>
<gene>
    <name type="primary">ASPA</name>
    <name type="synonym">ACY2</name>
</gene>
<reference key="1">
    <citation type="journal article" date="1993" name="Nat. Genet.">
        <title>Cloning of the human aspartoacylase cDNA and a common missense mutation in Canavan disease.</title>
        <authorList>
            <person name="Kaul R."/>
            <person name="Gao G.P."/>
            <person name="Balamurugan K."/>
            <person name="Matalon R."/>
        </authorList>
    </citation>
    <scope>NUCLEOTIDE SEQUENCE [GENOMIC DNA]</scope>
    <scope>PARTIAL PROTEIN SEQUENCE</scope>
</reference>
<proteinExistence type="evidence at protein level"/>
<evidence type="ECO:0000250" key="1">
    <source>
        <dbReference type="UniProtKB" id="P45381"/>
    </source>
</evidence>
<evidence type="ECO:0000250" key="2">
    <source>
        <dbReference type="UniProtKB" id="Q9R1T5"/>
    </source>
</evidence>
<evidence type="ECO:0000305" key="3"/>
<name>ACY2_BOVIN</name>
<feature type="chain" id="PRO_0000216870" description="Aspartoacylase">
    <location>
        <begin position="1"/>
        <end position="313"/>
    </location>
</feature>
<feature type="active site" description="Proton donor/acceptor" evidence="1">
    <location>
        <position position="178"/>
    </location>
</feature>
<feature type="binding site" evidence="1">
    <location>
        <position position="21"/>
    </location>
    <ligand>
        <name>Zn(2+)</name>
        <dbReference type="ChEBI" id="CHEBI:29105"/>
    </ligand>
</feature>
<feature type="binding site" evidence="1">
    <location>
        <position position="24"/>
    </location>
    <ligand>
        <name>Zn(2+)</name>
        <dbReference type="ChEBI" id="CHEBI:29105"/>
    </ligand>
</feature>
<feature type="binding site" evidence="1">
    <location>
        <position position="63"/>
    </location>
    <ligand>
        <name>N-acetyl-L-aspartate</name>
        <dbReference type="ChEBI" id="CHEBI:16953"/>
    </ligand>
</feature>
<feature type="binding site" evidence="1">
    <location>
        <position position="70"/>
    </location>
    <ligand>
        <name>N-acetyl-L-aspartate</name>
        <dbReference type="ChEBI" id="CHEBI:16953"/>
    </ligand>
</feature>
<feature type="binding site" evidence="1">
    <location>
        <position position="71"/>
    </location>
    <ligand>
        <name>N-acetyl-L-aspartate</name>
        <dbReference type="ChEBI" id="CHEBI:16953"/>
    </ligand>
</feature>
<feature type="binding site" evidence="1">
    <location>
        <position position="116"/>
    </location>
    <ligand>
        <name>Zn(2+)</name>
        <dbReference type="ChEBI" id="CHEBI:29105"/>
    </ligand>
</feature>
<feature type="binding site" evidence="1">
    <location>
        <position position="164"/>
    </location>
    <ligand>
        <name>N-acetyl-L-aspartate</name>
        <dbReference type="ChEBI" id="CHEBI:16953"/>
    </ligand>
</feature>
<feature type="binding site" evidence="1">
    <location>
        <position position="168"/>
    </location>
    <ligand>
        <name>N-acetyl-L-aspartate</name>
        <dbReference type="ChEBI" id="CHEBI:16953"/>
    </ligand>
</feature>
<feature type="binding site" evidence="1">
    <location>
        <position position="288"/>
    </location>
    <ligand>
        <name>N-acetyl-L-aspartate</name>
        <dbReference type="ChEBI" id="CHEBI:16953"/>
    </ligand>
</feature>
<feature type="site" description="Transition state stabilizer" evidence="1">
    <location>
        <position position="63"/>
    </location>
</feature>